<dbReference type="EC" id="6.1.1.12" evidence="1"/>
<dbReference type="EMBL" id="AE010300">
    <property type="protein sequence ID" value="AAN48879.1"/>
    <property type="molecule type" value="Genomic_DNA"/>
</dbReference>
<dbReference type="RefSeq" id="NP_711861.1">
    <property type="nucleotide sequence ID" value="NC_004342.2"/>
</dbReference>
<dbReference type="RefSeq" id="WP_000683521.1">
    <property type="nucleotide sequence ID" value="NC_004342.2"/>
</dbReference>
<dbReference type="SMR" id="Q8F5K1"/>
<dbReference type="FunCoup" id="Q8F5K1">
    <property type="interactions" value="515"/>
</dbReference>
<dbReference type="STRING" id="189518.LA_1680"/>
<dbReference type="PaxDb" id="189518-LA_1680"/>
<dbReference type="EnsemblBacteria" id="AAN48879">
    <property type="protein sequence ID" value="AAN48879"/>
    <property type="gene ID" value="LA_1680"/>
</dbReference>
<dbReference type="KEGG" id="lil:LA_1680"/>
<dbReference type="PATRIC" id="fig|189518.3.peg.1674"/>
<dbReference type="HOGENOM" id="CLU_014330_3_2_12"/>
<dbReference type="InParanoid" id="Q8F5K1"/>
<dbReference type="OrthoDB" id="9802326at2"/>
<dbReference type="Proteomes" id="UP000001408">
    <property type="component" value="Chromosome I"/>
</dbReference>
<dbReference type="GO" id="GO:0005737">
    <property type="term" value="C:cytoplasm"/>
    <property type="evidence" value="ECO:0007669"/>
    <property type="project" value="UniProtKB-SubCell"/>
</dbReference>
<dbReference type="GO" id="GO:0004815">
    <property type="term" value="F:aspartate-tRNA ligase activity"/>
    <property type="evidence" value="ECO:0000318"/>
    <property type="project" value="GO_Central"/>
</dbReference>
<dbReference type="GO" id="GO:0005524">
    <property type="term" value="F:ATP binding"/>
    <property type="evidence" value="ECO:0007669"/>
    <property type="project" value="UniProtKB-UniRule"/>
</dbReference>
<dbReference type="GO" id="GO:0003676">
    <property type="term" value="F:nucleic acid binding"/>
    <property type="evidence" value="ECO:0007669"/>
    <property type="project" value="InterPro"/>
</dbReference>
<dbReference type="GO" id="GO:0006422">
    <property type="term" value="P:aspartyl-tRNA aminoacylation"/>
    <property type="evidence" value="ECO:0000318"/>
    <property type="project" value="GO_Central"/>
</dbReference>
<dbReference type="CDD" id="cd00777">
    <property type="entry name" value="AspRS_core"/>
    <property type="match status" value="1"/>
</dbReference>
<dbReference type="CDD" id="cd04317">
    <property type="entry name" value="EcAspRS_like_N"/>
    <property type="match status" value="1"/>
</dbReference>
<dbReference type="Gene3D" id="3.30.930.10">
    <property type="entry name" value="Bira Bifunctional Protein, Domain 2"/>
    <property type="match status" value="1"/>
</dbReference>
<dbReference type="Gene3D" id="3.30.1360.30">
    <property type="entry name" value="GAD-like domain"/>
    <property type="match status" value="1"/>
</dbReference>
<dbReference type="Gene3D" id="2.40.50.140">
    <property type="entry name" value="Nucleic acid-binding proteins"/>
    <property type="match status" value="1"/>
</dbReference>
<dbReference type="HAMAP" id="MF_00044">
    <property type="entry name" value="Asp_tRNA_synth_type1"/>
    <property type="match status" value="1"/>
</dbReference>
<dbReference type="InterPro" id="IPR004364">
    <property type="entry name" value="Aa-tRNA-synt_II"/>
</dbReference>
<dbReference type="InterPro" id="IPR006195">
    <property type="entry name" value="aa-tRNA-synth_II"/>
</dbReference>
<dbReference type="InterPro" id="IPR045864">
    <property type="entry name" value="aa-tRNA-synth_II/BPL/LPL"/>
</dbReference>
<dbReference type="InterPro" id="IPR004524">
    <property type="entry name" value="Asp-tRNA-ligase_1"/>
</dbReference>
<dbReference type="InterPro" id="IPR047089">
    <property type="entry name" value="Asp-tRNA-ligase_1_N"/>
</dbReference>
<dbReference type="InterPro" id="IPR002312">
    <property type="entry name" value="Asp/Asn-tRNA-synth_IIb"/>
</dbReference>
<dbReference type="InterPro" id="IPR047090">
    <property type="entry name" value="AspRS_core"/>
</dbReference>
<dbReference type="InterPro" id="IPR004115">
    <property type="entry name" value="GAD-like_sf"/>
</dbReference>
<dbReference type="InterPro" id="IPR029351">
    <property type="entry name" value="GAD_dom"/>
</dbReference>
<dbReference type="InterPro" id="IPR012340">
    <property type="entry name" value="NA-bd_OB-fold"/>
</dbReference>
<dbReference type="InterPro" id="IPR004365">
    <property type="entry name" value="NA-bd_OB_tRNA"/>
</dbReference>
<dbReference type="NCBIfam" id="TIGR00459">
    <property type="entry name" value="aspS_bact"/>
    <property type="match status" value="1"/>
</dbReference>
<dbReference type="NCBIfam" id="NF001750">
    <property type="entry name" value="PRK00476.1"/>
    <property type="match status" value="1"/>
</dbReference>
<dbReference type="PANTHER" id="PTHR22594:SF5">
    <property type="entry name" value="ASPARTATE--TRNA LIGASE, MITOCHONDRIAL"/>
    <property type="match status" value="1"/>
</dbReference>
<dbReference type="PANTHER" id="PTHR22594">
    <property type="entry name" value="ASPARTYL/LYSYL-TRNA SYNTHETASE"/>
    <property type="match status" value="1"/>
</dbReference>
<dbReference type="Pfam" id="PF02938">
    <property type="entry name" value="GAD"/>
    <property type="match status" value="1"/>
</dbReference>
<dbReference type="Pfam" id="PF00152">
    <property type="entry name" value="tRNA-synt_2"/>
    <property type="match status" value="1"/>
</dbReference>
<dbReference type="Pfam" id="PF01336">
    <property type="entry name" value="tRNA_anti-codon"/>
    <property type="match status" value="1"/>
</dbReference>
<dbReference type="PRINTS" id="PR01042">
    <property type="entry name" value="TRNASYNTHASP"/>
</dbReference>
<dbReference type="SUPFAM" id="SSF55681">
    <property type="entry name" value="Class II aaRS and biotin synthetases"/>
    <property type="match status" value="1"/>
</dbReference>
<dbReference type="SUPFAM" id="SSF55261">
    <property type="entry name" value="GAD domain-like"/>
    <property type="match status" value="1"/>
</dbReference>
<dbReference type="SUPFAM" id="SSF50249">
    <property type="entry name" value="Nucleic acid-binding proteins"/>
    <property type="match status" value="1"/>
</dbReference>
<dbReference type="PROSITE" id="PS50862">
    <property type="entry name" value="AA_TRNA_LIGASE_II"/>
    <property type="match status" value="1"/>
</dbReference>
<feature type="chain" id="PRO_0000110893" description="Aspartate--tRNA ligase">
    <location>
        <begin position="1"/>
        <end position="601"/>
    </location>
</feature>
<feature type="region of interest" description="Aspartate" evidence="1">
    <location>
        <begin position="207"/>
        <end position="210"/>
    </location>
</feature>
<feature type="binding site" evidence="1">
    <location>
        <position position="183"/>
    </location>
    <ligand>
        <name>L-aspartate</name>
        <dbReference type="ChEBI" id="CHEBI:29991"/>
    </ligand>
</feature>
<feature type="binding site" evidence="1">
    <location>
        <begin position="229"/>
        <end position="231"/>
    </location>
    <ligand>
        <name>ATP</name>
        <dbReference type="ChEBI" id="CHEBI:30616"/>
    </ligand>
</feature>
<feature type="binding site" evidence="1">
    <location>
        <position position="229"/>
    </location>
    <ligand>
        <name>L-aspartate</name>
        <dbReference type="ChEBI" id="CHEBI:29991"/>
    </ligand>
</feature>
<feature type="binding site" evidence="1">
    <location>
        <position position="238"/>
    </location>
    <ligand>
        <name>ATP</name>
        <dbReference type="ChEBI" id="CHEBI:30616"/>
    </ligand>
</feature>
<feature type="binding site" evidence="1">
    <location>
        <position position="457"/>
    </location>
    <ligand>
        <name>L-aspartate</name>
        <dbReference type="ChEBI" id="CHEBI:29991"/>
    </ligand>
</feature>
<feature type="binding site" evidence="1">
    <location>
        <position position="497"/>
    </location>
    <ligand>
        <name>ATP</name>
        <dbReference type="ChEBI" id="CHEBI:30616"/>
    </ligand>
</feature>
<feature type="binding site" evidence="1">
    <location>
        <position position="504"/>
    </location>
    <ligand>
        <name>L-aspartate</name>
        <dbReference type="ChEBI" id="CHEBI:29991"/>
    </ligand>
</feature>
<feature type="binding site" evidence="1">
    <location>
        <begin position="549"/>
        <end position="552"/>
    </location>
    <ligand>
        <name>ATP</name>
        <dbReference type="ChEBI" id="CHEBI:30616"/>
    </ligand>
</feature>
<organism>
    <name type="scientific">Leptospira interrogans serogroup Icterohaemorrhagiae serovar Lai (strain 56601)</name>
    <dbReference type="NCBI Taxonomy" id="189518"/>
    <lineage>
        <taxon>Bacteria</taxon>
        <taxon>Pseudomonadati</taxon>
        <taxon>Spirochaetota</taxon>
        <taxon>Spirochaetia</taxon>
        <taxon>Leptospirales</taxon>
        <taxon>Leptospiraceae</taxon>
        <taxon>Leptospira</taxon>
    </lineage>
</organism>
<proteinExistence type="inferred from homology"/>
<sequence length="601" mass="69124">MKHWIQENYKNRSWAGELNESQEGKQIVLFGWSFRFRDQGGVIFIDLRDRTGIIQVVARKELLGDSFTLAEKVRSEYVLAVRGTLKKRDLESINPRMQTGTIEVVLDQLEILNVAKTPPFSLDEFDEVSEELKLKYRYLDFRREELKNRMIKRHEFIFAIRNYLNKRKFVEIETPILNKSTPEGARDFLVPSRLNPNQFYALPQSPQIFKQILMVGGMERYFQIVKCFRDEDLRADRQPEFTQLDMEFSFVSQEEILSEIEGLVETIYKEVFNIQLSIPFPRMTYNTAMEEYGSDKPDLRFGMKLVDVSEIVKDCDFNVFAGAVKNGGTVKVVCVPGGSIISRKEIEDYTAWLNRDYKAKGLAYMKHGTEGLESTITKRFKKEELEAISKACGSKEGDMLFFGADEREIVNHSLGALRLKLSERFETPKENEINITWIVDFPMFEWNKDHKRWDALHHPFTSPSDESIPFFESMETLQKNAGNATAKAYDLVMNGVEIGGGSIRIHSREIQNKVFQILGINEEEAKEKFGFLLEALEFGAPPHGGLAFGIDRMLMLLTGGKSIRDVIAFPKTQKGLCLMSECPSPVEEKQLQELKIKLAKV</sequence>
<name>SYD_LEPIN</name>
<evidence type="ECO:0000255" key="1">
    <source>
        <dbReference type="HAMAP-Rule" id="MF_00044"/>
    </source>
</evidence>
<accession>Q8F5K1</accession>
<protein>
    <recommendedName>
        <fullName evidence="1">Aspartate--tRNA ligase</fullName>
        <ecNumber evidence="1">6.1.1.12</ecNumber>
    </recommendedName>
    <alternativeName>
        <fullName evidence="1">Aspartyl-tRNA synthetase</fullName>
        <shortName evidence="1">AspRS</shortName>
    </alternativeName>
</protein>
<comment type="function">
    <text evidence="1">Catalyzes the attachment of L-aspartate to tRNA(Asp) in a two-step reaction: L-aspartate is first activated by ATP to form Asp-AMP and then transferred to the acceptor end of tRNA(Asp).</text>
</comment>
<comment type="catalytic activity">
    <reaction evidence="1">
        <text>tRNA(Asp) + L-aspartate + ATP = L-aspartyl-tRNA(Asp) + AMP + diphosphate</text>
        <dbReference type="Rhea" id="RHEA:19649"/>
        <dbReference type="Rhea" id="RHEA-COMP:9660"/>
        <dbReference type="Rhea" id="RHEA-COMP:9678"/>
        <dbReference type="ChEBI" id="CHEBI:29991"/>
        <dbReference type="ChEBI" id="CHEBI:30616"/>
        <dbReference type="ChEBI" id="CHEBI:33019"/>
        <dbReference type="ChEBI" id="CHEBI:78442"/>
        <dbReference type="ChEBI" id="CHEBI:78516"/>
        <dbReference type="ChEBI" id="CHEBI:456215"/>
        <dbReference type="EC" id="6.1.1.12"/>
    </reaction>
</comment>
<comment type="subunit">
    <text evidence="1">Homodimer.</text>
</comment>
<comment type="subcellular location">
    <subcellularLocation>
        <location evidence="1">Cytoplasm</location>
    </subcellularLocation>
</comment>
<comment type="similarity">
    <text evidence="1">Belongs to the class-II aminoacyl-tRNA synthetase family. Type 1 subfamily.</text>
</comment>
<gene>
    <name evidence="1" type="primary">aspS</name>
    <name type="ordered locus">LA_1680</name>
</gene>
<reference key="1">
    <citation type="journal article" date="2003" name="Nature">
        <title>Unique physiological and pathogenic features of Leptospira interrogans revealed by whole-genome sequencing.</title>
        <authorList>
            <person name="Ren S.-X."/>
            <person name="Fu G."/>
            <person name="Jiang X.-G."/>
            <person name="Zeng R."/>
            <person name="Miao Y.-G."/>
            <person name="Xu H."/>
            <person name="Zhang Y.-X."/>
            <person name="Xiong H."/>
            <person name="Lu G."/>
            <person name="Lu L.-F."/>
            <person name="Jiang H.-Q."/>
            <person name="Jia J."/>
            <person name="Tu Y.-F."/>
            <person name="Jiang J.-X."/>
            <person name="Gu W.-Y."/>
            <person name="Zhang Y.-Q."/>
            <person name="Cai Z."/>
            <person name="Sheng H.-H."/>
            <person name="Yin H.-F."/>
            <person name="Zhang Y."/>
            <person name="Zhu G.-F."/>
            <person name="Wan M."/>
            <person name="Huang H.-L."/>
            <person name="Qian Z."/>
            <person name="Wang S.-Y."/>
            <person name="Ma W."/>
            <person name="Yao Z.-J."/>
            <person name="Shen Y."/>
            <person name="Qiang B.-Q."/>
            <person name="Xia Q.-C."/>
            <person name="Guo X.-K."/>
            <person name="Danchin A."/>
            <person name="Saint Girons I."/>
            <person name="Somerville R.L."/>
            <person name="Wen Y.-M."/>
            <person name="Shi M.-H."/>
            <person name="Chen Z."/>
            <person name="Xu J.-G."/>
            <person name="Zhao G.-P."/>
        </authorList>
    </citation>
    <scope>NUCLEOTIDE SEQUENCE [LARGE SCALE GENOMIC DNA]</scope>
    <source>
        <strain>56601</strain>
    </source>
</reference>
<keyword id="KW-0030">Aminoacyl-tRNA synthetase</keyword>
<keyword id="KW-0067">ATP-binding</keyword>
<keyword id="KW-0963">Cytoplasm</keyword>
<keyword id="KW-0436">Ligase</keyword>
<keyword id="KW-0547">Nucleotide-binding</keyword>
<keyword id="KW-0648">Protein biosynthesis</keyword>
<keyword id="KW-1185">Reference proteome</keyword>